<organism>
    <name type="scientific">Escherichia coli O6:K15:H31 (strain 536 / UPEC)</name>
    <dbReference type="NCBI Taxonomy" id="362663"/>
    <lineage>
        <taxon>Bacteria</taxon>
        <taxon>Pseudomonadati</taxon>
        <taxon>Pseudomonadota</taxon>
        <taxon>Gammaproteobacteria</taxon>
        <taxon>Enterobacterales</taxon>
        <taxon>Enterobacteriaceae</taxon>
        <taxon>Escherichia</taxon>
    </lineage>
</organism>
<dbReference type="EMBL" id="CP000247">
    <property type="protein sequence ID" value="ABG72150.1"/>
    <property type="molecule type" value="Genomic_DNA"/>
</dbReference>
<dbReference type="RefSeq" id="WP_000028878.1">
    <property type="nucleotide sequence ID" value="NC_008253.1"/>
</dbReference>
<dbReference type="SMR" id="Q0TA79"/>
<dbReference type="GeneID" id="86944525"/>
<dbReference type="KEGG" id="ecp:ECP_4199"/>
<dbReference type="HOGENOM" id="CLU_086499_3_2_6"/>
<dbReference type="Proteomes" id="UP000009182">
    <property type="component" value="Chromosome"/>
</dbReference>
<dbReference type="GO" id="GO:0022625">
    <property type="term" value="C:cytosolic large ribosomal subunit"/>
    <property type="evidence" value="ECO:0007669"/>
    <property type="project" value="TreeGrafter"/>
</dbReference>
<dbReference type="GO" id="GO:0003729">
    <property type="term" value="F:mRNA binding"/>
    <property type="evidence" value="ECO:0007669"/>
    <property type="project" value="TreeGrafter"/>
</dbReference>
<dbReference type="GO" id="GO:0003735">
    <property type="term" value="F:structural constituent of ribosome"/>
    <property type="evidence" value="ECO:0007669"/>
    <property type="project" value="InterPro"/>
</dbReference>
<dbReference type="GO" id="GO:0006412">
    <property type="term" value="P:translation"/>
    <property type="evidence" value="ECO:0007669"/>
    <property type="project" value="UniProtKB-UniRule"/>
</dbReference>
<dbReference type="CDD" id="cd00387">
    <property type="entry name" value="Ribosomal_L7_L12"/>
    <property type="match status" value="1"/>
</dbReference>
<dbReference type="FunFam" id="1.20.5.710:FF:000001">
    <property type="entry name" value="50S ribosomal protein L7/L12"/>
    <property type="match status" value="1"/>
</dbReference>
<dbReference type="FunFam" id="3.30.1390.10:FF:000001">
    <property type="entry name" value="50S ribosomal protein L7/L12"/>
    <property type="match status" value="1"/>
</dbReference>
<dbReference type="Gene3D" id="3.30.1390.10">
    <property type="match status" value="1"/>
</dbReference>
<dbReference type="Gene3D" id="1.20.5.710">
    <property type="entry name" value="Single helix bin"/>
    <property type="match status" value="1"/>
</dbReference>
<dbReference type="HAMAP" id="MF_00368">
    <property type="entry name" value="Ribosomal_bL12"/>
    <property type="match status" value="1"/>
</dbReference>
<dbReference type="InterPro" id="IPR000206">
    <property type="entry name" value="Ribosomal_bL12"/>
</dbReference>
<dbReference type="InterPro" id="IPR013823">
    <property type="entry name" value="Ribosomal_bL12_C"/>
</dbReference>
<dbReference type="InterPro" id="IPR014719">
    <property type="entry name" value="Ribosomal_bL12_C/ClpS-like"/>
</dbReference>
<dbReference type="InterPro" id="IPR008932">
    <property type="entry name" value="Ribosomal_bL12_oligo"/>
</dbReference>
<dbReference type="InterPro" id="IPR036235">
    <property type="entry name" value="Ribosomal_bL12_oligo_N_sf"/>
</dbReference>
<dbReference type="NCBIfam" id="TIGR00855">
    <property type="entry name" value="L12"/>
    <property type="match status" value="1"/>
</dbReference>
<dbReference type="PANTHER" id="PTHR45987">
    <property type="entry name" value="39S RIBOSOMAL PROTEIN L12"/>
    <property type="match status" value="1"/>
</dbReference>
<dbReference type="PANTHER" id="PTHR45987:SF4">
    <property type="entry name" value="LARGE RIBOSOMAL SUBUNIT PROTEIN BL12M"/>
    <property type="match status" value="1"/>
</dbReference>
<dbReference type="Pfam" id="PF00542">
    <property type="entry name" value="Ribosomal_L12"/>
    <property type="match status" value="1"/>
</dbReference>
<dbReference type="Pfam" id="PF16320">
    <property type="entry name" value="Ribosomal_L12_N"/>
    <property type="match status" value="1"/>
</dbReference>
<dbReference type="SUPFAM" id="SSF54736">
    <property type="entry name" value="ClpS-like"/>
    <property type="match status" value="1"/>
</dbReference>
<dbReference type="SUPFAM" id="SSF48300">
    <property type="entry name" value="Ribosomal protein L7/12, oligomerisation (N-terminal) domain"/>
    <property type="match status" value="1"/>
</dbReference>
<feature type="chain" id="PRO_1000007001" description="Large ribosomal subunit protein bL12">
    <location>
        <begin position="1"/>
        <end position="121"/>
    </location>
</feature>
<evidence type="ECO:0000255" key="1">
    <source>
        <dbReference type="HAMAP-Rule" id="MF_00368"/>
    </source>
</evidence>
<evidence type="ECO:0000305" key="2"/>
<proteinExistence type="inferred from homology"/>
<gene>
    <name evidence="1" type="primary">rplL</name>
    <name type="ordered locus">ECP_4199</name>
</gene>
<keyword id="KW-0687">Ribonucleoprotein</keyword>
<keyword id="KW-0689">Ribosomal protein</keyword>
<accession>Q0TA79</accession>
<protein>
    <recommendedName>
        <fullName evidence="1">Large ribosomal subunit protein bL12</fullName>
    </recommendedName>
    <alternativeName>
        <fullName evidence="2">50S ribosomal protein L7/L12</fullName>
    </alternativeName>
</protein>
<comment type="function">
    <text evidence="1">Forms part of the ribosomal stalk which helps the ribosome interact with GTP-bound translation factors. Is thus essential for accurate translation.</text>
</comment>
<comment type="subunit">
    <text evidence="1">Homodimer. Part of the ribosomal stalk of the 50S ribosomal subunit. Forms a multimeric L10(L12)X complex, where L10 forms an elongated spine to which 2 to 4 L12 dimers bind in a sequential fashion. Binds GTP-bound translation factors.</text>
</comment>
<comment type="similarity">
    <text evidence="1">Belongs to the bacterial ribosomal protein bL12 family.</text>
</comment>
<sequence>MSITKDQIIEAVAAMSVMDVVELISAMEEKFGVSAAAAVAVAAGPVEAAEEKTEFDVILKAAGANKVAVIKAVRGATGLGLKEAKDLVESAPAALKEGVSKDDAEALKKALEEAGAEVEVK</sequence>
<reference key="1">
    <citation type="journal article" date="2006" name="Mol. Microbiol.">
        <title>Role of pathogenicity island-associated integrases in the genome plasticity of uropathogenic Escherichia coli strain 536.</title>
        <authorList>
            <person name="Hochhut B."/>
            <person name="Wilde C."/>
            <person name="Balling G."/>
            <person name="Middendorf B."/>
            <person name="Dobrindt U."/>
            <person name="Brzuszkiewicz E."/>
            <person name="Gottschalk G."/>
            <person name="Carniel E."/>
            <person name="Hacker J."/>
        </authorList>
    </citation>
    <scope>NUCLEOTIDE SEQUENCE [LARGE SCALE GENOMIC DNA]</scope>
    <source>
        <strain>536 / UPEC</strain>
    </source>
</reference>
<name>RL7_ECOL5</name>